<accession>P34592</accession>
<evidence type="ECO:0000256" key="1">
    <source>
        <dbReference type="SAM" id="MobiDB-lite"/>
    </source>
</evidence>
<name>YN58_CAEEL</name>
<protein>
    <recommendedName>
        <fullName>Uncharacterized protein ZC21.8</fullName>
    </recommendedName>
</protein>
<sequence length="145" mass="15994">MEAILKSIMLLKYLQFIIIFCSGLCMALVICTKAKSGKGTNTAKSSGGNNGTNLNAKRSNTTQDDVKFNLNIKNTEQKRDEFDDDEENPLAKIPTKARLPKKDTLSKTSSNSKMDREASYFAPNEKQTGKSCYMSTAMSTTKTTT</sequence>
<dbReference type="EMBL" id="FO080281">
    <property type="protein sequence ID" value="CCD62576.1"/>
    <property type="molecule type" value="Genomic_DNA"/>
</dbReference>
<dbReference type="RefSeq" id="NP_498879.2">
    <property type="nucleotide sequence ID" value="NM_066478.4"/>
</dbReference>
<dbReference type="SMR" id="P34592"/>
<dbReference type="BioGRID" id="55609">
    <property type="interactions" value="2"/>
</dbReference>
<dbReference type="FunCoup" id="P34592">
    <property type="interactions" value="102"/>
</dbReference>
<dbReference type="PaxDb" id="6239-ZC21.8"/>
<dbReference type="EnsemblMetazoa" id="ZC21.8.1">
    <property type="protein sequence ID" value="ZC21.8.1"/>
    <property type="gene ID" value="WBGene00022507"/>
</dbReference>
<dbReference type="GeneID" id="191055"/>
<dbReference type="KEGG" id="cel:CELE_ZC21.8"/>
<dbReference type="UCSC" id="ZC21.8">
    <property type="organism name" value="c. elegans"/>
</dbReference>
<dbReference type="AGR" id="WB:WBGene00022507"/>
<dbReference type="CTD" id="191055"/>
<dbReference type="WormBase" id="ZC21.8">
    <property type="protein sequence ID" value="CE38667"/>
    <property type="gene ID" value="WBGene00022507"/>
</dbReference>
<dbReference type="eggNOG" id="ENOG502TJB8">
    <property type="taxonomic scope" value="Eukaryota"/>
</dbReference>
<dbReference type="HOGENOM" id="CLU_1519250_0_0_1"/>
<dbReference type="InParanoid" id="P34592"/>
<dbReference type="OMA" id="CMALVIC"/>
<dbReference type="OrthoDB" id="5822416at2759"/>
<dbReference type="PhylomeDB" id="P34592"/>
<dbReference type="PRO" id="PR:P34592"/>
<dbReference type="Proteomes" id="UP000001940">
    <property type="component" value="Chromosome III"/>
</dbReference>
<dbReference type="Bgee" id="WBGene00022507">
    <property type="expression patterns" value="Expressed in germ line (C elegans) and 3 other cell types or tissues"/>
</dbReference>
<dbReference type="InterPro" id="IPR039962">
    <property type="entry name" value="ZC21.8"/>
</dbReference>
<dbReference type="PANTHER" id="PTHR38616:SF2">
    <property type="entry name" value="DUF4408 DOMAIN-CONTAINING PROTEIN"/>
    <property type="match status" value="1"/>
</dbReference>
<dbReference type="PANTHER" id="PTHR38616">
    <property type="entry name" value="PROTEIN CBG03925"/>
    <property type="match status" value="1"/>
</dbReference>
<organism>
    <name type="scientific">Caenorhabditis elegans</name>
    <dbReference type="NCBI Taxonomy" id="6239"/>
    <lineage>
        <taxon>Eukaryota</taxon>
        <taxon>Metazoa</taxon>
        <taxon>Ecdysozoa</taxon>
        <taxon>Nematoda</taxon>
        <taxon>Chromadorea</taxon>
        <taxon>Rhabditida</taxon>
        <taxon>Rhabditina</taxon>
        <taxon>Rhabditomorpha</taxon>
        <taxon>Rhabditoidea</taxon>
        <taxon>Rhabditidae</taxon>
        <taxon>Peloderinae</taxon>
        <taxon>Caenorhabditis</taxon>
    </lineage>
</organism>
<gene>
    <name type="ORF">ZC21.8</name>
</gene>
<proteinExistence type="predicted"/>
<keyword id="KW-1185">Reference proteome</keyword>
<reference key="1">
    <citation type="journal article" date="1994" name="Nature">
        <title>2.2 Mb of contiguous nucleotide sequence from chromosome III of C. elegans.</title>
        <authorList>
            <person name="Wilson R."/>
            <person name="Ainscough R."/>
            <person name="Anderson K."/>
            <person name="Baynes C."/>
            <person name="Berks M."/>
            <person name="Bonfield J."/>
            <person name="Burton J."/>
            <person name="Connell M."/>
            <person name="Copsey T."/>
            <person name="Cooper J."/>
            <person name="Coulson A."/>
            <person name="Craxton M."/>
            <person name="Dear S."/>
            <person name="Du Z."/>
            <person name="Durbin R."/>
            <person name="Favello A."/>
            <person name="Fraser A."/>
            <person name="Fulton L."/>
            <person name="Gardner A."/>
            <person name="Green P."/>
            <person name="Hawkins T."/>
            <person name="Hillier L."/>
            <person name="Jier M."/>
            <person name="Johnston L."/>
            <person name="Jones M."/>
            <person name="Kershaw J."/>
            <person name="Kirsten J."/>
            <person name="Laisster N."/>
            <person name="Latreille P."/>
            <person name="Lightning J."/>
            <person name="Lloyd C."/>
            <person name="Mortimore B."/>
            <person name="O'Callaghan M."/>
            <person name="Parsons J."/>
            <person name="Percy C."/>
            <person name="Rifken L."/>
            <person name="Roopra A."/>
            <person name="Saunders D."/>
            <person name="Shownkeen R."/>
            <person name="Sims M."/>
            <person name="Smaldon N."/>
            <person name="Smith A."/>
            <person name="Smith M."/>
            <person name="Sonnhammer E."/>
            <person name="Staden R."/>
            <person name="Sulston J."/>
            <person name="Thierry-Mieg J."/>
            <person name="Thomas K."/>
            <person name="Vaudin M."/>
            <person name="Vaughan K."/>
            <person name="Waterston R."/>
            <person name="Watson A."/>
            <person name="Weinstock L."/>
            <person name="Wilkinson-Sproat J."/>
            <person name="Wohldman P."/>
        </authorList>
    </citation>
    <scope>NUCLEOTIDE SEQUENCE [LARGE SCALE GENOMIC DNA]</scope>
    <source>
        <strain>Bristol N2</strain>
    </source>
</reference>
<reference key="2">
    <citation type="journal article" date="1998" name="Science">
        <title>Genome sequence of the nematode C. elegans: a platform for investigating biology.</title>
        <authorList>
            <consortium name="The C. elegans sequencing consortium"/>
        </authorList>
    </citation>
    <scope>NUCLEOTIDE SEQUENCE [LARGE SCALE GENOMIC DNA]</scope>
    <source>
        <strain>Bristol N2</strain>
    </source>
</reference>
<feature type="chain" id="PRO_0000065495" description="Uncharacterized protein ZC21.8">
    <location>
        <begin position="1"/>
        <end position="145"/>
    </location>
</feature>
<feature type="region of interest" description="Disordered" evidence="1">
    <location>
        <begin position="37"/>
        <end position="123"/>
    </location>
</feature>
<feature type="compositionally biased region" description="Polar residues" evidence="1">
    <location>
        <begin position="38"/>
        <end position="63"/>
    </location>
</feature>